<dbReference type="EC" id="2.7.7.8" evidence="1"/>
<dbReference type="EMBL" id="CP000728">
    <property type="protein sequence ID" value="ABS41353.1"/>
    <property type="molecule type" value="Genomic_DNA"/>
</dbReference>
<dbReference type="RefSeq" id="WP_012100369.1">
    <property type="nucleotide sequence ID" value="NC_009699.1"/>
</dbReference>
<dbReference type="SMR" id="A7GG00"/>
<dbReference type="KEGG" id="cbf:CLI_2468"/>
<dbReference type="HOGENOM" id="CLU_004217_2_2_9"/>
<dbReference type="Proteomes" id="UP000002410">
    <property type="component" value="Chromosome"/>
</dbReference>
<dbReference type="GO" id="GO:0005829">
    <property type="term" value="C:cytosol"/>
    <property type="evidence" value="ECO:0007669"/>
    <property type="project" value="TreeGrafter"/>
</dbReference>
<dbReference type="GO" id="GO:0000175">
    <property type="term" value="F:3'-5'-RNA exonuclease activity"/>
    <property type="evidence" value="ECO:0007669"/>
    <property type="project" value="TreeGrafter"/>
</dbReference>
<dbReference type="GO" id="GO:0000287">
    <property type="term" value="F:magnesium ion binding"/>
    <property type="evidence" value="ECO:0007669"/>
    <property type="project" value="UniProtKB-UniRule"/>
</dbReference>
<dbReference type="GO" id="GO:0004654">
    <property type="term" value="F:polyribonucleotide nucleotidyltransferase activity"/>
    <property type="evidence" value="ECO:0007669"/>
    <property type="project" value="UniProtKB-UniRule"/>
</dbReference>
<dbReference type="GO" id="GO:0003723">
    <property type="term" value="F:RNA binding"/>
    <property type="evidence" value="ECO:0007669"/>
    <property type="project" value="UniProtKB-UniRule"/>
</dbReference>
<dbReference type="GO" id="GO:0006402">
    <property type="term" value="P:mRNA catabolic process"/>
    <property type="evidence" value="ECO:0007669"/>
    <property type="project" value="UniProtKB-UniRule"/>
</dbReference>
<dbReference type="GO" id="GO:0006396">
    <property type="term" value="P:RNA processing"/>
    <property type="evidence" value="ECO:0007669"/>
    <property type="project" value="InterPro"/>
</dbReference>
<dbReference type="CDD" id="cd02393">
    <property type="entry name" value="KH-I_PNPase"/>
    <property type="match status" value="1"/>
</dbReference>
<dbReference type="CDD" id="cd11363">
    <property type="entry name" value="RNase_PH_PNPase_1"/>
    <property type="match status" value="1"/>
</dbReference>
<dbReference type="CDD" id="cd11364">
    <property type="entry name" value="RNase_PH_PNPase_2"/>
    <property type="match status" value="1"/>
</dbReference>
<dbReference type="CDD" id="cd04472">
    <property type="entry name" value="S1_PNPase"/>
    <property type="match status" value="1"/>
</dbReference>
<dbReference type="FunFam" id="2.40.50.140:FF:000023">
    <property type="entry name" value="Polyribonucleotide nucleotidyltransferase"/>
    <property type="match status" value="1"/>
</dbReference>
<dbReference type="FunFam" id="3.30.1370.10:FF:000001">
    <property type="entry name" value="Polyribonucleotide nucleotidyltransferase"/>
    <property type="match status" value="1"/>
</dbReference>
<dbReference type="FunFam" id="3.30.230.70:FF:000001">
    <property type="entry name" value="Polyribonucleotide nucleotidyltransferase"/>
    <property type="match status" value="1"/>
</dbReference>
<dbReference type="FunFam" id="3.30.230.70:FF:000037">
    <property type="entry name" value="Polyribonucleotide nucleotidyltransferase"/>
    <property type="match status" value="1"/>
</dbReference>
<dbReference type="Gene3D" id="3.30.230.70">
    <property type="entry name" value="GHMP Kinase, N-terminal domain"/>
    <property type="match status" value="2"/>
</dbReference>
<dbReference type="Gene3D" id="3.30.1370.10">
    <property type="entry name" value="K Homology domain, type 1"/>
    <property type="match status" value="1"/>
</dbReference>
<dbReference type="Gene3D" id="2.40.50.140">
    <property type="entry name" value="Nucleic acid-binding proteins"/>
    <property type="match status" value="1"/>
</dbReference>
<dbReference type="HAMAP" id="MF_01595">
    <property type="entry name" value="PNPase"/>
    <property type="match status" value="1"/>
</dbReference>
<dbReference type="InterPro" id="IPR001247">
    <property type="entry name" value="ExoRNase_PH_dom1"/>
</dbReference>
<dbReference type="InterPro" id="IPR015847">
    <property type="entry name" value="ExoRNase_PH_dom2"/>
</dbReference>
<dbReference type="InterPro" id="IPR036345">
    <property type="entry name" value="ExoRNase_PH_dom2_sf"/>
</dbReference>
<dbReference type="InterPro" id="IPR004087">
    <property type="entry name" value="KH_dom"/>
</dbReference>
<dbReference type="InterPro" id="IPR004088">
    <property type="entry name" value="KH_dom_type_1"/>
</dbReference>
<dbReference type="InterPro" id="IPR036612">
    <property type="entry name" value="KH_dom_type_1_sf"/>
</dbReference>
<dbReference type="InterPro" id="IPR012340">
    <property type="entry name" value="NA-bd_OB-fold"/>
</dbReference>
<dbReference type="InterPro" id="IPR012162">
    <property type="entry name" value="PNPase"/>
</dbReference>
<dbReference type="InterPro" id="IPR027408">
    <property type="entry name" value="PNPase/RNase_PH_dom_sf"/>
</dbReference>
<dbReference type="InterPro" id="IPR015848">
    <property type="entry name" value="PNPase_PH_RNA-bd_bac/org-type"/>
</dbReference>
<dbReference type="InterPro" id="IPR036456">
    <property type="entry name" value="PNPase_PH_RNA-bd_sf"/>
</dbReference>
<dbReference type="InterPro" id="IPR020568">
    <property type="entry name" value="Ribosomal_Su5_D2-typ_SF"/>
</dbReference>
<dbReference type="InterPro" id="IPR003029">
    <property type="entry name" value="S1_domain"/>
</dbReference>
<dbReference type="NCBIfam" id="TIGR03591">
    <property type="entry name" value="polynuc_phos"/>
    <property type="match status" value="1"/>
</dbReference>
<dbReference type="NCBIfam" id="NF008805">
    <property type="entry name" value="PRK11824.1"/>
    <property type="match status" value="1"/>
</dbReference>
<dbReference type="PANTHER" id="PTHR11252">
    <property type="entry name" value="POLYRIBONUCLEOTIDE NUCLEOTIDYLTRANSFERASE"/>
    <property type="match status" value="1"/>
</dbReference>
<dbReference type="PANTHER" id="PTHR11252:SF0">
    <property type="entry name" value="POLYRIBONUCLEOTIDE NUCLEOTIDYLTRANSFERASE 1, MITOCHONDRIAL"/>
    <property type="match status" value="1"/>
</dbReference>
<dbReference type="Pfam" id="PF00013">
    <property type="entry name" value="KH_1"/>
    <property type="match status" value="1"/>
</dbReference>
<dbReference type="Pfam" id="PF03726">
    <property type="entry name" value="PNPase"/>
    <property type="match status" value="1"/>
</dbReference>
<dbReference type="Pfam" id="PF01138">
    <property type="entry name" value="RNase_PH"/>
    <property type="match status" value="2"/>
</dbReference>
<dbReference type="Pfam" id="PF03725">
    <property type="entry name" value="RNase_PH_C"/>
    <property type="match status" value="1"/>
</dbReference>
<dbReference type="Pfam" id="PF00575">
    <property type="entry name" value="S1"/>
    <property type="match status" value="1"/>
</dbReference>
<dbReference type="PIRSF" id="PIRSF005499">
    <property type="entry name" value="PNPase"/>
    <property type="match status" value="1"/>
</dbReference>
<dbReference type="SMART" id="SM00322">
    <property type="entry name" value="KH"/>
    <property type="match status" value="1"/>
</dbReference>
<dbReference type="SMART" id="SM00316">
    <property type="entry name" value="S1"/>
    <property type="match status" value="1"/>
</dbReference>
<dbReference type="SUPFAM" id="SSF54791">
    <property type="entry name" value="Eukaryotic type KH-domain (KH-domain type I)"/>
    <property type="match status" value="1"/>
</dbReference>
<dbReference type="SUPFAM" id="SSF50249">
    <property type="entry name" value="Nucleic acid-binding proteins"/>
    <property type="match status" value="1"/>
</dbReference>
<dbReference type="SUPFAM" id="SSF46915">
    <property type="entry name" value="Polynucleotide phosphorylase/guanosine pentaphosphate synthase (PNPase/GPSI), domain 3"/>
    <property type="match status" value="1"/>
</dbReference>
<dbReference type="SUPFAM" id="SSF55666">
    <property type="entry name" value="Ribonuclease PH domain 2-like"/>
    <property type="match status" value="2"/>
</dbReference>
<dbReference type="SUPFAM" id="SSF54211">
    <property type="entry name" value="Ribosomal protein S5 domain 2-like"/>
    <property type="match status" value="2"/>
</dbReference>
<dbReference type="PROSITE" id="PS50084">
    <property type="entry name" value="KH_TYPE_1"/>
    <property type="match status" value="1"/>
</dbReference>
<dbReference type="PROSITE" id="PS50126">
    <property type="entry name" value="S1"/>
    <property type="match status" value="1"/>
</dbReference>
<protein>
    <recommendedName>
        <fullName evidence="1">Polyribonucleotide nucleotidyltransferase</fullName>
        <ecNumber evidence="1">2.7.7.8</ecNumber>
    </recommendedName>
    <alternativeName>
        <fullName evidence="1">Polynucleotide phosphorylase</fullName>
        <shortName evidence="1">PNPase</shortName>
    </alternativeName>
</protein>
<sequence length="702" mass="77556">MIHTLETTVAGRKMKVDFGKTGMLSNAAIFMSYGDTVVMINANASKEPREGIDFFPLSVDYEERLYSVGKIPGGFIKREGKPSDKSILHARSIDRPLRPLFPNGYRNDVQIVNTVLSVEQDNLPEILAINGSSLALCLSSIPFTTPVAAVSVGLVDGEFIINPTVAQRENTILDLTVCATKERIMMVEAGGQEIDEETMYNAILFGFEECKNIVAFQEEAVAKLGKTKDEQVLYKADEEVEKEVKRFAFDMIKEAMYIMDKDERNAQLDKVKEKISEEFSQKYEDKGADIKEVIYKTQKEIVRNMLLNEDRRPDGRAFDEVRPIGCEVGILPRTHGTGLFTRGLTQVMTVATLGALGDVQILDGIAEEESKRYMHHYNFPSYSVGEVRPLRGPGRREIGHGALAERALEPLIPSQEEFPYTIRLVSEVLSSNGSTSQASVCGSTLALLDAGVPIKRPAAGIAMGLITSDDLEREKVITDIQGIEDFFGDMDFKVAGTEKGITSIQFDTKIKGLSNSCVKDALEGAKKARLHILGKIKECIPEPRKELSKYAPRTEIICIDPEKIRDVIGAGGKVINKIIADTNVKIEIKEDGKIFVTSNNEPEGVKKAISIIEGLTKEVVQGEIYLGKVTKTTNFGAFVEILPGKEGLVHISKLDFARVEKVEDVVSVGDEILVKVTDIDNQGRINLSRKDAIAKKEEEKDK</sequence>
<gene>
    <name evidence="1" type="primary">pnp</name>
    <name type="ordered locus">CLI_2468</name>
</gene>
<proteinExistence type="inferred from homology"/>
<name>PNP_CLOBL</name>
<reference key="1">
    <citation type="submission" date="2007-06" db="EMBL/GenBank/DDBJ databases">
        <authorList>
            <person name="Brinkac L.M."/>
            <person name="Daugherty S."/>
            <person name="Dodson R.J."/>
            <person name="Madupu R."/>
            <person name="Brown J.L."/>
            <person name="Bruce D."/>
            <person name="Detter C."/>
            <person name="Munk C."/>
            <person name="Smith L.A."/>
            <person name="Smith T.J."/>
            <person name="White O."/>
            <person name="Brettin T.S."/>
        </authorList>
    </citation>
    <scope>NUCLEOTIDE SEQUENCE [LARGE SCALE GENOMIC DNA]</scope>
    <source>
        <strain>Langeland / NCTC 10281 / Type F</strain>
    </source>
</reference>
<organism>
    <name type="scientific">Clostridium botulinum (strain Langeland / NCTC 10281 / Type F)</name>
    <dbReference type="NCBI Taxonomy" id="441772"/>
    <lineage>
        <taxon>Bacteria</taxon>
        <taxon>Bacillati</taxon>
        <taxon>Bacillota</taxon>
        <taxon>Clostridia</taxon>
        <taxon>Eubacteriales</taxon>
        <taxon>Clostridiaceae</taxon>
        <taxon>Clostridium</taxon>
    </lineage>
</organism>
<keyword id="KW-0963">Cytoplasm</keyword>
<keyword id="KW-0460">Magnesium</keyword>
<keyword id="KW-0479">Metal-binding</keyword>
<keyword id="KW-0548">Nucleotidyltransferase</keyword>
<keyword id="KW-0694">RNA-binding</keyword>
<keyword id="KW-0808">Transferase</keyword>
<feature type="chain" id="PRO_0000329597" description="Polyribonucleotide nucleotidyltransferase">
    <location>
        <begin position="1"/>
        <end position="702"/>
    </location>
</feature>
<feature type="domain" description="KH" evidence="1">
    <location>
        <begin position="552"/>
        <end position="612"/>
    </location>
</feature>
<feature type="domain" description="S1 motif" evidence="1">
    <location>
        <begin position="622"/>
        <end position="690"/>
    </location>
</feature>
<feature type="binding site" evidence="1">
    <location>
        <position position="485"/>
    </location>
    <ligand>
        <name>Mg(2+)</name>
        <dbReference type="ChEBI" id="CHEBI:18420"/>
    </ligand>
</feature>
<feature type="binding site" evidence="1">
    <location>
        <position position="491"/>
    </location>
    <ligand>
        <name>Mg(2+)</name>
        <dbReference type="ChEBI" id="CHEBI:18420"/>
    </ligand>
</feature>
<evidence type="ECO:0000255" key="1">
    <source>
        <dbReference type="HAMAP-Rule" id="MF_01595"/>
    </source>
</evidence>
<comment type="function">
    <text evidence="1">Involved in mRNA degradation. Catalyzes the phosphorolysis of single-stranded polyribonucleotides processively in the 3'- to 5'-direction.</text>
</comment>
<comment type="catalytic activity">
    <reaction evidence="1">
        <text>RNA(n+1) + phosphate = RNA(n) + a ribonucleoside 5'-diphosphate</text>
        <dbReference type="Rhea" id="RHEA:22096"/>
        <dbReference type="Rhea" id="RHEA-COMP:14527"/>
        <dbReference type="Rhea" id="RHEA-COMP:17342"/>
        <dbReference type="ChEBI" id="CHEBI:43474"/>
        <dbReference type="ChEBI" id="CHEBI:57930"/>
        <dbReference type="ChEBI" id="CHEBI:140395"/>
        <dbReference type="EC" id="2.7.7.8"/>
    </reaction>
</comment>
<comment type="cofactor">
    <cofactor evidence="1">
        <name>Mg(2+)</name>
        <dbReference type="ChEBI" id="CHEBI:18420"/>
    </cofactor>
</comment>
<comment type="subcellular location">
    <subcellularLocation>
        <location evidence="1">Cytoplasm</location>
    </subcellularLocation>
</comment>
<comment type="similarity">
    <text evidence="1">Belongs to the polyribonucleotide nucleotidyltransferase family.</text>
</comment>
<accession>A7GG00</accession>